<keyword id="KW-0804">Transcription</keyword>
<keyword id="KW-0889">Transcription antitermination</keyword>
<keyword id="KW-0805">Transcription regulation</keyword>
<keyword id="KW-0806">Transcription termination</keyword>
<organism>
    <name type="scientific">Staphylococcus aureus (strain MSSA476)</name>
    <dbReference type="NCBI Taxonomy" id="282459"/>
    <lineage>
        <taxon>Bacteria</taxon>
        <taxon>Bacillati</taxon>
        <taxon>Bacillota</taxon>
        <taxon>Bacilli</taxon>
        <taxon>Bacillales</taxon>
        <taxon>Staphylococcaceae</taxon>
        <taxon>Staphylococcus</taxon>
    </lineage>
</organism>
<dbReference type="EMBL" id="BX571857">
    <property type="protein sequence ID" value="CAG42269.1"/>
    <property type="molecule type" value="Genomic_DNA"/>
</dbReference>
<dbReference type="RefSeq" id="WP_001288302.1">
    <property type="nucleotide sequence ID" value="NC_002953.3"/>
</dbReference>
<dbReference type="SMR" id="Q6GBV1"/>
<dbReference type="KEGG" id="sas:SAS0494"/>
<dbReference type="HOGENOM" id="CLU_067287_1_1_9"/>
<dbReference type="GO" id="GO:0005829">
    <property type="term" value="C:cytosol"/>
    <property type="evidence" value="ECO:0007669"/>
    <property type="project" value="TreeGrafter"/>
</dbReference>
<dbReference type="GO" id="GO:0006353">
    <property type="term" value="P:DNA-templated transcription termination"/>
    <property type="evidence" value="ECO:0007669"/>
    <property type="project" value="UniProtKB-UniRule"/>
</dbReference>
<dbReference type="GO" id="GO:0032784">
    <property type="term" value="P:regulation of DNA-templated transcription elongation"/>
    <property type="evidence" value="ECO:0007669"/>
    <property type="project" value="InterPro"/>
</dbReference>
<dbReference type="GO" id="GO:0031564">
    <property type="term" value="P:transcription antitermination"/>
    <property type="evidence" value="ECO:0007669"/>
    <property type="project" value="UniProtKB-UniRule"/>
</dbReference>
<dbReference type="GO" id="GO:0140673">
    <property type="term" value="P:transcription elongation-coupled chromatin remodeling"/>
    <property type="evidence" value="ECO:0007669"/>
    <property type="project" value="InterPro"/>
</dbReference>
<dbReference type="CDD" id="cd06091">
    <property type="entry name" value="KOW_NusG"/>
    <property type="match status" value="1"/>
</dbReference>
<dbReference type="CDD" id="cd09891">
    <property type="entry name" value="NGN_Bact_1"/>
    <property type="match status" value="1"/>
</dbReference>
<dbReference type="FunFam" id="2.30.30.30:FF:000002">
    <property type="entry name" value="Transcription termination/antitermination factor NusG"/>
    <property type="match status" value="1"/>
</dbReference>
<dbReference type="FunFam" id="3.30.70.940:FF:000002">
    <property type="entry name" value="Transcription termination/antitermination protein NusG"/>
    <property type="match status" value="1"/>
</dbReference>
<dbReference type="Gene3D" id="2.30.30.30">
    <property type="match status" value="1"/>
</dbReference>
<dbReference type="Gene3D" id="3.30.70.940">
    <property type="entry name" value="NusG, N-terminal domain"/>
    <property type="match status" value="1"/>
</dbReference>
<dbReference type="HAMAP" id="MF_00948">
    <property type="entry name" value="NusG"/>
    <property type="match status" value="1"/>
</dbReference>
<dbReference type="InterPro" id="IPR005824">
    <property type="entry name" value="KOW"/>
</dbReference>
<dbReference type="InterPro" id="IPR047050">
    <property type="entry name" value="NGN"/>
</dbReference>
<dbReference type="InterPro" id="IPR006645">
    <property type="entry name" value="NGN-like_dom"/>
</dbReference>
<dbReference type="InterPro" id="IPR036735">
    <property type="entry name" value="NGN_dom_sf"/>
</dbReference>
<dbReference type="InterPro" id="IPR043425">
    <property type="entry name" value="NusG-like"/>
</dbReference>
<dbReference type="InterPro" id="IPR014722">
    <property type="entry name" value="Rib_uL2_dom2"/>
</dbReference>
<dbReference type="InterPro" id="IPR001062">
    <property type="entry name" value="Transcrpt_antiterm_NusG"/>
</dbReference>
<dbReference type="InterPro" id="IPR015869">
    <property type="entry name" value="Transcrpt_antiterm_NusG_bac_CS"/>
</dbReference>
<dbReference type="InterPro" id="IPR008991">
    <property type="entry name" value="Translation_prot_SH3-like_sf"/>
</dbReference>
<dbReference type="NCBIfam" id="TIGR00922">
    <property type="entry name" value="nusG"/>
    <property type="match status" value="1"/>
</dbReference>
<dbReference type="PANTHER" id="PTHR30265">
    <property type="entry name" value="RHO-INTERACTING TRANSCRIPTION TERMINATION FACTOR NUSG"/>
    <property type="match status" value="1"/>
</dbReference>
<dbReference type="PANTHER" id="PTHR30265:SF2">
    <property type="entry name" value="TRANSCRIPTION TERMINATION_ANTITERMINATION PROTEIN NUSG"/>
    <property type="match status" value="1"/>
</dbReference>
<dbReference type="Pfam" id="PF00467">
    <property type="entry name" value="KOW"/>
    <property type="match status" value="1"/>
</dbReference>
<dbReference type="Pfam" id="PF02357">
    <property type="entry name" value="NusG"/>
    <property type="match status" value="1"/>
</dbReference>
<dbReference type="PRINTS" id="PR00338">
    <property type="entry name" value="NUSGTNSCPFCT"/>
</dbReference>
<dbReference type="SMART" id="SM00739">
    <property type="entry name" value="KOW"/>
    <property type="match status" value="1"/>
</dbReference>
<dbReference type="SMART" id="SM00738">
    <property type="entry name" value="NGN"/>
    <property type="match status" value="1"/>
</dbReference>
<dbReference type="SUPFAM" id="SSF82679">
    <property type="entry name" value="N-utilization substance G protein NusG, N-terminal domain"/>
    <property type="match status" value="1"/>
</dbReference>
<dbReference type="SUPFAM" id="SSF50104">
    <property type="entry name" value="Translation proteins SH3-like domain"/>
    <property type="match status" value="1"/>
</dbReference>
<dbReference type="PROSITE" id="PS01014">
    <property type="entry name" value="NUSG"/>
    <property type="match status" value="1"/>
</dbReference>
<protein>
    <recommendedName>
        <fullName evidence="1">Transcription termination/antitermination protein NusG</fullName>
    </recommendedName>
</protein>
<reference key="1">
    <citation type="journal article" date="2004" name="Proc. Natl. Acad. Sci. U.S.A.">
        <title>Complete genomes of two clinical Staphylococcus aureus strains: evidence for the rapid evolution of virulence and drug resistance.</title>
        <authorList>
            <person name="Holden M.T.G."/>
            <person name="Feil E.J."/>
            <person name="Lindsay J.A."/>
            <person name="Peacock S.J."/>
            <person name="Day N.P.J."/>
            <person name="Enright M.C."/>
            <person name="Foster T.J."/>
            <person name="Moore C.E."/>
            <person name="Hurst L."/>
            <person name="Atkin R."/>
            <person name="Barron A."/>
            <person name="Bason N."/>
            <person name="Bentley S.D."/>
            <person name="Chillingworth C."/>
            <person name="Chillingworth T."/>
            <person name="Churcher C."/>
            <person name="Clark L."/>
            <person name="Corton C."/>
            <person name="Cronin A."/>
            <person name="Doggett J."/>
            <person name="Dowd L."/>
            <person name="Feltwell T."/>
            <person name="Hance Z."/>
            <person name="Harris B."/>
            <person name="Hauser H."/>
            <person name="Holroyd S."/>
            <person name="Jagels K."/>
            <person name="James K.D."/>
            <person name="Lennard N."/>
            <person name="Line A."/>
            <person name="Mayes R."/>
            <person name="Moule S."/>
            <person name="Mungall K."/>
            <person name="Ormond D."/>
            <person name="Quail M.A."/>
            <person name="Rabbinowitsch E."/>
            <person name="Rutherford K.M."/>
            <person name="Sanders M."/>
            <person name="Sharp S."/>
            <person name="Simmonds M."/>
            <person name="Stevens K."/>
            <person name="Whitehead S."/>
            <person name="Barrell B.G."/>
            <person name="Spratt B.G."/>
            <person name="Parkhill J."/>
        </authorList>
    </citation>
    <scope>NUCLEOTIDE SEQUENCE [LARGE SCALE GENOMIC DNA]</scope>
    <source>
        <strain>MSSA476</strain>
    </source>
</reference>
<proteinExistence type="inferred from homology"/>
<comment type="function">
    <text evidence="1">Participates in transcription elongation, termination and antitermination.</text>
</comment>
<comment type="similarity">
    <text evidence="1">Belongs to the NusG family.</text>
</comment>
<accession>Q6GBV1</accession>
<sequence>MSEEVGAKRWYAVHTYSGYENKVKKNLEKRVESMNMTEQIFRVVIPEEEETQVKDGKAKTTVKKTFPGYVLVELIMTDESWYVVRNTPGVTGFVGSAGAGSKPNPLLPEEVRFILKQMGLKEKTIDVELEVGEQVRIKSGPFANQVGEVQEIETDKFKLTVLVDMFGRETPVEVEFDQIEKL</sequence>
<evidence type="ECO:0000255" key="1">
    <source>
        <dbReference type="HAMAP-Rule" id="MF_00948"/>
    </source>
</evidence>
<name>NUSG_STAAS</name>
<feature type="chain" id="PRO_0000113951" description="Transcription termination/antitermination protein NusG">
    <location>
        <begin position="1"/>
        <end position="182"/>
    </location>
</feature>
<feature type="domain" description="KOW" evidence="1">
    <location>
        <begin position="131"/>
        <end position="163"/>
    </location>
</feature>
<gene>
    <name evidence="1" type="primary">nusG</name>
    <name type="ordered locus">SAS0494</name>
</gene>